<evidence type="ECO:0000255" key="1">
    <source>
        <dbReference type="HAMAP-Rule" id="MF_00915"/>
    </source>
</evidence>
<evidence type="ECO:0000269" key="2">
    <source>
    </source>
</evidence>
<evidence type="ECO:0000269" key="3">
    <source>
    </source>
</evidence>
<evidence type="ECO:0000269" key="4">
    <source>
    </source>
</evidence>
<evidence type="ECO:0000269" key="5">
    <source>
    </source>
</evidence>
<evidence type="ECO:0007829" key="6">
    <source>
        <dbReference type="PDB" id="2UXT"/>
    </source>
</evidence>
<evidence type="ECO:0007829" key="7">
    <source>
        <dbReference type="PDB" id="2UXV"/>
    </source>
</evidence>
<sequence length="470" mass="51858">MSLSRRQFIQASGIALCAGAVPLKASAAGQQQPLPVPPLLESRRGQPLFMTVQRAHWSFTPGTRASVWGINGRYLGPTIRVWKGDDVKLIYSNRLTENVSMTVAGLQVPGPLMGGPARMMSPNADWAPVLPIRQNAATLWYHANTPNRTAQQVYNGLAGMWLVEDEVSKSLPIPNHYGVDDFPVIIQDKRLDNFGTPEYNEPGSGGFVGDTLLVNGVQSPYVEVSRGWVRLRLLNASNSRRYQLQMNDGRPLHVISGDQGFLPAPVSVKQLSLAPGERREILVDMSNGDEVSITCGEAASIVDRIRGFFEPSSILVSTLVLTLRPTGLLPLVTDSLPMRLLPTEIMAGSPIRSRDISLGDDPGINGQLWDVNRIDVTAQQGTWERWTVRADEPQAFHIEGVMFQIRNVNGAMPFPEDRGWKDTVWVDGQVELLVYFGQPSWAHFPFYFNSQTLEMADRGSIGQLLVNPVP</sequence>
<reference key="1">
    <citation type="journal article" date="1997" name="Science">
        <title>The complete genome sequence of Escherichia coli K-12.</title>
        <authorList>
            <person name="Blattner F.R."/>
            <person name="Plunkett G. III"/>
            <person name="Bloch C.A."/>
            <person name="Perna N.T."/>
            <person name="Burland V."/>
            <person name="Riley M."/>
            <person name="Collado-Vides J."/>
            <person name="Glasner J.D."/>
            <person name="Rode C.K."/>
            <person name="Mayhew G.F."/>
            <person name="Gregor J."/>
            <person name="Davis N.W."/>
            <person name="Kirkpatrick H.A."/>
            <person name="Goeden M.A."/>
            <person name="Rose D.J."/>
            <person name="Mau B."/>
            <person name="Shao Y."/>
        </authorList>
    </citation>
    <scope>NUCLEOTIDE SEQUENCE [LARGE SCALE GENOMIC DNA]</scope>
    <source>
        <strain>K12 / MG1655 / ATCC 47076</strain>
    </source>
</reference>
<reference key="2">
    <citation type="journal article" date="2006" name="Mol. Syst. Biol.">
        <title>Highly accurate genome sequences of Escherichia coli K-12 strains MG1655 and W3110.</title>
        <authorList>
            <person name="Hayashi K."/>
            <person name="Morooka N."/>
            <person name="Yamamoto Y."/>
            <person name="Fujita K."/>
            <person name="Isono K."/>
            <person name="Choi S."/>
            <person name="Ohtsubo E."/>
            <person name="Baba T."/>
            <person name="Wanner B.L."/>
            <person name="Mori H."/>
            <person name="Horiuchi T."/>
        </authorList>
    </citation>
    <scope>NUCLEOTIDE SEQUENCE [LARGE SCALE GENOMIC DNA]</scope>
    <source>
        <strain>K12 / W3110 / ATCC 27325 / DSM 5911</strain>
    </source>
</reference>
<reference key="3">
    <citation type="journal article" date="1992" name="Mol. Gen. Genet.">
        <title>Characterization of the Escherichia coli gene for 1-acyl-sn-glycerol-3-phosphate acyltransferase (plsC).</title>
        <authorList>
            <person name="Coleman J."/>
        </authorList>
    </citation>
    <scope>NUCLEOTIDE SEQUENCE [GENOMIC DNA] OF 1-89</scope>
</reference>
<reference key="4">
    <citation type="journal article" date="1997" name="Electrophoresis">
        <title>Comparing the predicted and observed properties of proteins encoded in the genome of Escherichia coli K-12.</title>
        <authorList>
            <person name="Link A.J."/>
            <person name="Robison K."/>
            <person name="Church G.M."/>
        </authorList>
    </citation>
    <scope>PROTEIN SEQUENCE OF 28-39</scope>
    <source>
        <strain>K12 / EMG2</strain>
    </source>
</reference>
<reference key="5">
    <citation type="journal article" date="1999" name="J. Biol. Chem.">
        <title>Sec-independent protein translocation in Escherichia coli. A distinct and pivotal role for the TatB protein.</title>
        <authorList>
            <person name="Sargent F."/>
            <person name="Stanley N.R."/>
            <person name="Berks B.C."/>
            <person name="Palmer T."/>
        </authorList>
    </citation>
    <scope>SUBCELLULAR LOCATION</scope>
    <scope>EXPORT VIA THE TAT-SYSTEM</scope>
    <source>
        <strain>K12</strain>
    </source>
</reference>
<reference key="6">
    <citation type="journal article" date="2007" name="J. Bacteriol.">
        <title>Role of SufI (FtsP) in cell division of Escherichia coli: evidence for its involvement in stabilizing the assembly of the divisome.</title>
        <authorList>
            <person name="Samaluru H."/>
            <person name="Saisree L."/>
            <person name="Reddy M."/>
        </authorList>
    </citation>
    <scope>FUNCTION</scope>
    <scope>DISRUPTION PHENOTYPE</scope>
    <scope>GENE NAME</scope>
    <source>
        <strain>K12</strain>
    </source>
</reference>
<reference key="7">
    <citation type="journal article" date="2007" name="J. Biol. Chem.">
        <title>Export pathway selectivity of Escherichia coli twin arginine translocation signal peptides.</title>
        <authorList>
            <person name="Tullman-Ercek D."/>
            <person name="DeLisa M.P."/>
            <person name="Kawarasaki Y."/>
            <person name="Iranpour P."/>
            <person name="Ribnicky B."/>
            <person name="Palmer T."/>
            <person name="Georgiou G."/>
        </authorList>
    </citation>
    <scope>EXPORT VIA THE TAT-SYSTEM AND THE SEC-SYSTEM</scope>
</reference>
<reference key="8">
    <citation type="journal article" date="2009" name="J. Mol. Biol.">
        <title>The Escherichia coli cell division protein and model Tat substrate SufI (FtsP) localizes to the septal ring and has a multicopper oxidase-like structure.</title>
        <authorList>
            <person name="Tarry M."/>
            <person name="Arends S.J."/>
            <person name="Roversi P."/>
            <person name="Piette E."/>
            <person name="Sargent F."/>
            <person name="Berks B.C."/>
            <person name="Weiss D.S."/>
            <person name="Lea S.M."/>
        </authorList>
    </citation>
    <scope>X-RAY CRYSTALLOGRAPHY (1.9 ANGSTROMS) OF 28-470</scope>
    <scope>SUBCELLULAR LOCATION</scope>
    <source>
        <strain>K12</strain>
    </source>
</reference>
<name>FTSP_ECOLI</name>
<organism>
    <name type="scientific">Escherichia coli (strain K12)</name>
    <dbReference type="NCBI Taxonomy" id="83333"/>
    <lineage>
        <taxon>Bacteria</taxon>
        <taxon>Pseudomonadati</taxon>
        <taxon>Pseudomonadota</taxon>
        <taxon>Gammaproteobacteria</taxon>
        <taxon>Enterobacterales</taxon>
        <taxon>Enterobacteriaceae</taxon>
        <taxon>Escherichia</taxon>
    </lineage>
</organism>
<gene>
    <name evidence="1" type="primary">ftsP</name>
    <name type="synonym">sufI</name>
    <name type="ordered locus">b3017</name>
    <name type="ordered locus">JW2985</name>
</gene>
<comment type="function">
    <text evidence="1 3">Cell division protein that is required for growth during stress conditions. May be involved in protecting or stabilizing the divisomal assembly under conditions of stress.</text>
</comment>
<comment type="subcellular location">
    <subcellularLocation>
        <location evidence="1 2 4">Periplasm</location>
    </subcellularLocation>
    <text>Localizes to the division septum. Localization requires FtsZ, FtsQ, FtsL and FtsN.</text>
</comment>
<comment type="PTM">
    <text>Exported by the Tat system. The position of the signal peptide cleavage has been experimentally proven. Can also be exported by the Sec system.</text>
</comment>
<comment type="disruption phenotype">
    <text evidence="3">Cells lacking this gene are sensitive to oxidative stress and DNA damage at high temperature. They also exhibit filamentation.</text>
</comment>
<comment type="miscellaneous">
    <text>Is used as a model substrate in studies of the twin-arginine translocation (Tat) protein transport system.</text>
</comment>
<comment type="similarity">
    <text evidence="1">Belongs to the FtsP family.</text>
</comment>
<feature type="signal peptide" description="Tat-type signal" evidence="1 5">
    <location>
        <begin position="1"/>
        <end position="27"/>
    </location>
</feature>
<feature type="chain" id="PRO_0000002993" description="Cell division protein FtsP">
    <location>
        <begin position="28"/>
        <end position="470"/>
    </location>
</feature>
<feature type="domain" description="Plastocyanin-like" evidence="1">
    <location>
        <begin position="68"/>
        <end position="164"/>
    </location>
</feature>
<feature type="strand" evidence="7">
    <location>
        <begin position="39"/>
        <end position="42"/>
    </location>
</feature>
<feature type="strand" evidence="6">
    <location>
        <begin position="43"/>
        <end position="45"/>
    </location>
</feature>
<feature type="strand" evidence="6">
    <location>
        <begin position="48"/>
        <end position="54"/>
    </location>
</feature>
<feature type="helix" evidence="6">
    <location>
        <begin position="57"/>
        <end position="59"/>
    </location>
</feature>
<feature type="strand" evidence="6">
    <location>
        <begin position="61"/>
        <end position="65"/>
    </location>
</feature>
<feature type="strand" evidence="6">
    <location>
        <begin position="68"/>
        <end position="70"/>
    </location>
</feature>
<feature type="strand" evidence="6">
    <location>
        <begin position="73"/>
        <end position="75"/>
    </location>
</feature>
<feature type="strand" evidence="6">
    <location>
        <begin position="78"/>
        <end position="82"/>
    </location>
</feature>
<feature type="strand" evidence="6">
    <location>
        <begin position="86"/>
        <end position="93"/>
    </location>
</feature>
<feature type="strand" evidence="6">
    <location>
        <begin position="95"/>
        <end position="97"/>
    </location>
</feature>
<feature type="strand" evidence="6">
    <location>
        <begin position="101"/>
        <end position="104"/>
    </location>
</feature>
<feature type="helix" evidence="6">
    <location>
        <begin position="110"/>
        <end position="112"/>
    </location>
</feature>
<feature type="helix" evidence="6">
    <location>
        <begin position="116"/>
        <end position="118"/>
    </location>
</feature>
<feature type="strand" evidence="6">
    <location>
        <begin position="129"/>
        <end position="131"/>
    </location>
</feature>
<feature type="strand" evidence="6">
    <location>
        <begin position="136"/>
        <end position="143"/>
    </location>
</feature>
<feature type="turn" evidence="6">
    <location>
        <begin position="146"/>
        <end position="148"/>
    </location>
</feature>
<feature type="helix" evidence="6">
    <location>
        <begin position="149"/>
        <end position="154"/>
    </location>
</feature>
<feature type="strand" evidence="6">
    <location>
        <begin position="158"/>
        <end position="164"/>
    </location>
</feature>
<feature type="helix" evidence="6">
    <location>
        <begin position="166"/>
        <end position="170"/>
    </location>
</feature>
<feature type="strand" evidence="6">
    <location>
        <begin position="171"/>
        <end position="173"/>
    </location>
</feature>
<feature type="turn" evidence="6">
    <location>
        <begin position="177"/>
        <end position="179"/>
    </location>
</feature>
<feature type="strand" evidence="6">
    <location>
        <begin position="180"/>
        <end position="191"/>
    </location>
</feature>
<feature type="strand" evidence="6">
    <location>
        <begin position="203"/>
        <end position="205"/>
    </location>
</feature>
<feature type="strand" evidence="6">
    <location>
        <begin position="210"/>
        <end position="214"/>
    </location>
</feature>
<feature type="strand" evidence="6">
    <location>
        <begin position="217"/>
        <end position="219"/>
    </location>
</feature>
<feature type="strand" evidence="6">
    <location>
        <begin position="221"/>
        <end position="224"/>
    </location>
</feature>
<feature type="strand" evidence="6">
    <location>
        <begin position="226"/>
        <end position="235"/>
    </location>
</feature>
<feature type="strand" evidence="6">
    <location>
        <begin position="242"/>
        <end position="246"/>
    </location>
</feature>
<feature type="strand" evidence="6">
    <location>
        <begin position="252"/>
        <end position="256"/>
    </location>
</feature>
<feature type="strand" evidence="6">
    <location>
        <begin position="258"/>
        <end position="273"/>
    </location>
</feature>
<feature type="strand" evidence="6">
    <location>
        <begin position="278"/>
        <end position="284"/>
    </location>
</feature>
<feature type="strand" evidence="6">
    <location>
        <begin position="291"/>
        <end position="294"/>
    </location>
</feature>
<feature type="strand" evidence="6">
    <location>
        <begin position="319"/>
        <end position="325"/>
    </location>
</feature>
<feature type="strand" evidence="6">
    <location>
        <begin position="340"/>
        <end position="343"/>
    </location>
</feature>
<feature type="strand" evidence="6">
    <location>
        <begin position="351"/>
        <end position="358"/>
    </location>
</feature>
<feature type="strand" evidence="6">
    <location>
        <begin position="360"/>
        <end position="364"/>
    </location>
</feature>
<feature type="strand" evidence="6">
    <location>
        <begin position="376"/>
        <end position="379"/>
    </location>
</feature>
<feature type="strand" evidence="6">
    <location>
        <begin position="383"/>
        <end position="398"/>
    </location>
</feature>
<feature type="strand" evidence="6">
    <location>
        <begin position="402"/>
        <end position="408"/>
    </location>
</feature>
<feature type="helix" evidence="6">
    <location>
        <begin position="415"/>
        <end position="417"/>
    </location>
</feature>
<feature type="strand" evidence="6">
    <location>
        <begin position="421"/>
        <end position="435"/>
    </location>
</feature>
<feature type="strand" evidence="6">
    <location>
        <begin position="446"/>
        <end position="452"/>
    </location>
</feature>
<feature type="helix" evidence="6">
    <location>
        <begin position="453"/>
        <end position="457"/>
    </location>
</feature>
<feature type="strand" evidence="6">
    <location>
        <begin position="461"/>
        <end position="467"/>
    </location>
</feature>
<dbReference type="EMBL" id="U28377">
    <property type="protein sequence ID" value="AAA69185.1"/>
    <property type="molecule type" value="Genomic_DNA"/>
</dbReference>
<dbReference type="EMBL" id="U00096">
    <property type="protein sequence ID" value="AAC76053.1"/>
    <property type="molecule type" value="Genomic_DNA"/>
</dbReference>
<dbReference type="EMBL" id="AP009048">
    <property type="protein sequence ID" value="BAE77073.1"/>
    <property type="molecule type" value="Genomic_DNA"/>
</dbReference>
<dbReference type="EMBL" id="M63491">
    <property type="protein sequence ID" value="AAA24398.1"/>
    <property type="molecule type" value="Genomic_DNA"/>
</dbReference>
<dbReference type="PIR" id="G65088">
    <property type="entry name" value="G65088"/>
</dbReference>
<dbReference type="RefSeq" id="NP_417489.1">
    <property type="nucleotide sequence ID" value="NC_000913.3"/>
</dbReference>
<dbReference type="RefSeq" id="WP_000059388.1">
    <property type="nucleotide sequence ID" value="NZ_SSZK01000023.1"/>
</dbReference>
<dbReference type="PDB" id="2UXT">
    <property type="method" value="X-ray"/>
    <property type="resolution" value="1.90 A"/>
    <property type="chains" value="A/B=28-470"/>
</dbReference>
<dbReference type="PDB" id="2UXV">
    <property type="method" value="X-ray"/>
    <property type="resolution" value="2.61 A"/>
    <property type="chains" value="A/B=28-470"/>
</dbReference>
<dbReference type="PDBsum" id="2UXT"/>
<dbReference type="PDBsum" id="2UXV"/>
<dbReference type="SMR" id="P26648"/>
<dbReference type="BioGRID" id="4260932">
    <property type="interactions" value="67"/>
</dbReference>
<dbReference type="BioGRID" id="849379">
    <property type="interactions" value="3"/>
</dbReference>
<dbReference type="DIP" id="DIP-10942N"/>
<dbReference type="FunCoup" id="P26648">
    <property type="interactions" value="105"/>
</dbReference>
<dbReference type="IntAct" id="P26648">
    <property type="interactions" value="9"/>
</dbReference>
<dbReference type="STRING" id="511145.b3017"/>
<dbReference type="jPOST" id="P26648"/>
<dbReference type="PaxDb" id="511145-b3017"/>
<dbReference type="EnsemblBacteria" id="AAC76053">
    <property type="protein sequence ID" value="AAC76053"/>
    <property type="gene ID" value="b3017"/>
</dbReference>
<dbReference type="GeneID" id="944982"/>
<dbReference type="KEGG" id="ecj:JW2985"/>
<dbReference type="KEGG" id="eco:b3017"/>
<dbReference type="KEGG" id="ecoc:C3026_16485"/>
<dbReference type="PATRIC" id="fig|1411691.4.peg.3713"/>
<dbReference type="EchoBASE" id="EB1350"/>
<dbReference type="eggNOG" id="COG2132">
    <property type="taxonomic scope" value="Bacteria"/>
</dbReference>
<dbReference type="HOGENOM" id="CLU_009100_2_4_6"/>
<dbReference type="InParanoid" id="P26648"/>
<dbReference type="OMA" id="GMWIIED"/>
<dbReference type="OrthoDB" id="9757546at2"/>
<dbReference type="PhylomeDB" id="P26648"/>
<dbReference type="BioCyc" id="EcoCyc:EG11376-MONOMER"/>
<dbReference type="EvolutionaryTrace" id="P26648"/>
<dbReference type="PRO" id="PR:P26648"/>
<dbReference type="Proteomes" id="UP000000625">
    <property type="component" value="Chromosome"/>
</dbReference>
<dbReference type="GO" id="GO:0032153">
    <property type="term" value="C:cell division site"/>
    <property type="evidence" value="ECO:0000314"/>
    <property type="project" value="EcoCyc"/>
</dbReference>
<dbReference type="GO" id="GO:0030288">
    <property type="term" value="C:outer membrane-bounded periplasmic space"/>
    <property type="evidence" value="ECO:0000314"/>
    <property type="project" value="EcoCyc"/>
</dbReference>
<dbReference type="GO" id="GO:0005507">
    <property type="term" value="F:copper ion binding"/>
    <property type="evidence" value="ECO:0007669"/>
    <property type="project" value="InterPro"/>
</dbReference>
<dbReference type="GO" id="GO:0016491">
    <property type="term" value="F:oxidoreductase activity"/>
    <property type="evidence" value="ECO:0000318"/>
    <property type="project" value="GO_Central"/>
</dbReference>
<dbReference type="GO" id="GO:0051301">
    <property type="term" value="P:cell division"/>
    <property type="evidence" value="ECO:0000315"/>
    <property type="project" value="CACAO"/>
</dbReference>
<dbReference type="GO" id="GO:0043093">
    <property type="term" value="P:FtsZ-dependent cytokinesis"/>
    <property type="evidence" value="ECO:0000269"/>
    <property type="project" value="EcoCyc"/>
</dbReference>
<dbReference type="GO" id="GO:0010212">
    <property type="term" value="P:response to ionizing radiation"/>
    <property type="evidence" value="ECO:0000315"/>
    <property type="project" value="EcoCyc"/>
</dbReference>
<dbReference type="GO" id="GO:0006979">
    <property type="term" value="P:response to oxidative stress"/>
    <property type="evidence" value="ECO:0000315"/>
    <property type="project" value="EcoCyc"/>
</dbReference>
<dbReference type="GO" id="GO:0006950">
    <property type="term" value="P:response to stress"/>
    <property type="evidence" value="ECO:0000315"/>
    <property type="project" value="EcoCyc"/>
</dbReference>
<dbReference type="CDD" id="cd04232">
    <property type="entry name" value="CuRO_1_CueO_FtsP"/>
    <property type="match status" value="1"/>
</dbReference>
<dbReference type="CDD" id="cd13867">
    <property type="entry name" value="CuRO_2_CueO_FtsP"/>
    <property type="match status" value="1"/>
</dbReference>
<dbReference type="CDD" id="cd13890">
    <property type="entry name" value="CuRO_3_CueO_FtsP"/>
    <property type="match status" value="1"/>
</dbReference>
<dbReference type="FunFam" id="2.60.40.420:FF:000004">
    <property type="entry name" value="Cell division protein FtsP"/>
    <property type="match status" value="1"/>
</dbReference>
<dbReference type="FunFam" id="2.60.40.420:FF:000006">
    <property type="entry name" value="Cell division protein FtsP"/>
    <property type="match status" value="1"/>
</dbReference>
<dbReference type="FunFam" id="2.60.40.420:FF:000007">
    <property type="entry name" value="Cell division protein FtsP"/>
    <property type="match status" value="1"/>
</dbReference>
<dbReference type="Gene3D" id="2.60.40.420">
    <property type="entry name" value="Cupredoxins - blue copper proteins"/>
    <property type="match status" value="3"/>
</dbReference>
<dbReference type="HAMAP" id="MF_00915">
    <property type="entry name" value="FtsP"/>
    <property type="match status" value="1"/>
</dbReference>
<dbReference type="InterPro" id="IPR011707">
    <property type="entry name" value="Cu-oxidase-like_N"/>
</dbReference>
<dbReference type="InterPro" id="IPR011706">
    <property type="entry name" value="Cu-oxidase_C"/>
</dbReference>
<dbReference type="InterPro" id="IPR045087">
    <property type="entry name" value="Cu-oxidase_fam"/>
</dbReference>
<dbReference type="InterPro" id="IPR008972">
    <property type="entry name" value="Cupredoxin"/>
</dbReference>
<dbReference type="InterPro" id="IPR026589">
    <property type="entry name" value="FtsP"/>
</dbReference>
<dbReference type="InterPro" id="IPR006311">
    <property type="entry name" value="TAT_signal"/>
</dbReference>
<dbReference type="InterPro" id="IPR019546">
    <property type="entry name" value="TAT_signal_bac_arc"/>
</dbReference>
<dbReference type="NCBIfam" id="NF008135">
    <property type="entry name" value="PRK10883.1"/>
    <property type="match status" value="1"/>
</dbReference>
<dbReference type="NCBIfam" id="TIGR01409">
    <property type="entry name" value="TAT_signal_seq"/>
    <property type="match status" value="1"/>
</dbReference>
<dbReference type="PANTHER" id="PTHR48267:SF1">
    <property type="entry name" value="BILIRUBIN OXIDASE"/>
    <property type="match status" value="1"/>
</dbReference>
<dbReference type="PANTHER" id="PTHR48267">
    <property type="entry name" value="CUPREDOXIN SUPERFAMILY PROTEIN"/>
    <property type="match status" value="1"/>
</dbReference>
<dbReference type="Pfam" id="PF07731">
    <property type="entry name" value="Cu-oxidase_2"/>
    <property type="match status" value="1"/>
</dbReference>
<dbReference type="Pfam" id="PF07732">
    <property type="entry name" value="Cu-oxidase_3"/>
    <property type="match status" value="1"/>
</dbReference>
<dbReference type="SUPFAM" id="SSF49503">
    <property type="entry name" value="Cupredoxins"/>
    <property type="match status" value="3"/>
</dbReference>
<dbReference type="PROSITE" id="PS51318">
    <property type="entry name" value="TAT"/>
    <property type="match status" value="1"/>
</dbReference>
<accession>P26648</accession>
<accession>Q2M9I3</accession>
<protein>
    <recommendedName>
        <fullName evidence="1">Cell division protein FtsP</fullName>
    </recommendedName>
</protein>
<keyword id="KW-0002">3D-structure</keyword>
<keyword id="KW-0131">Cell cycle</keyword>
<keyword id="KW-0132">Cell division</keyword>
<keyword id="KW-0903">Direct protein sequencing</keyword>
<keyword id="KW-0574">Periplasm</keyword>
<keyword id="KW-1185">Reference proteome</keyword>
<keyword id="KW-0732">Signal</keyword>
<proteinExistence type="evidence at protein level"/>